<name>GLMM_BACP2</name>
<sequence length="448" mass="48342">MGKYFGTDGVRGVANSELTPELAFKIGRFGGYVLTKDKERPKVLVGRDTRVSGHMLEGALVAGLLSIGAEVMRLGVISTPGVSYLTKAMDAEAGVMISASHNPVQDNGIKFFGGDGFKLSDEQENEIEQLMDQPVDQLPRPVGADLGTVNDYFEGGQKYLQFLKQTADEDFTGIHVALDCAHGATSSLATHLFADLDADVSTMGTSPNGLNINDGVGSTHPEALSVFVKEKGADIGLAFDGDGDRLIAVDEKGDIVDGDQIMYICARYLKGEGRLKDNTVVSTVMSNLGFYKALEKQGIKSIQTAVGDRYVVEAMKKDGYNVGGEQSGHLIFLDYNTTGDGMLSAIMLVNTLKATGKTLSELAAEMEKFPQLLVNVKVSDKYKVEENEKVKAVIQEVEKEMNGDGRILVRPSGTEPLVRVMAEAKTKELCDEYVTRITAVVKEEMGIE</sequence>
<feature type="chain" id="PRO_1000068889" description="Phosphoglucosamine mutase">
    <location>
        <begin position="1"/>
        <end position="448"/>
    </location>
</feature>
<feature type="active site" description="Phosphoserine intermediate" evidence="1">
    <location>
        <position position="100"/>
    </location>
</feature>
<feature type="binding site" description="via phosphate group" evidence="1">
    <location>
        <position position="100"/>
    </location>
    <ligand>
        <name>Mg(2+)</name>
        <dbReference type="ChEBI" id="CHEBI:18420"/>
    </ligand>
</feature>
<feature type="binding site" evidence="1">
    <location>
        <position position="240"/>
    </location>
    <ligand>
        <name>Mg(2+)</name>
        <dbReference type="ChEBI" id="CHEBI:18420"/>
    </ligand>
</feature>
<feature type="binding site" evidence="1">
    <location>
        <position position="242"/>
    </location>
    <ligand>
        <name>Mg(2+)</name>
        <dbReference type="ChEBI" id="CHEBI:18420"/>
    </ligand>
</feature>
<feature type="binding site" evidence="1">
    <location>
        <position position="244"/>
    </location>
    <ligand>
        <name>Mg(2+)</name>
        <dbReference type="ChEBI" id="CHEBI:18420"/>
    </ligand>
</feature>
<feature type="modified residue" description="Phosphoserine" evidence="1">
    <location>
        <position position="100"/>
    </location>
</feature>
<organism>
    <name type="scientific">Bacillus pumilus (strain SAFR-032)</name>
    <dbReference type="NCBI Taxonomy" id="315750"/>
    <lineage>
        <taxon>Bacteria</taxon>
        <taxon>Bacillati</taxon>
        <taxon>Bacillota</taxon>
        <taxon>Bacilli</taxon>
        <taxon>Bacillales</taxon>
        <taxon>Bacillaceae</taxon>
        <taxon>Bacillus</taxon>
    </lineage>
</organism>
<protein>
    <recommendedName>
        <fullName evidence="1">Phosphoglucosamine mutase</fullName>
        <ecNumber evidence="1">5.4.2.10</ecNumber>
    </recommendedName>
</protein>
<accession>A8F9E6</accession>
<keyword id="KW-0413">Isomerase</keyword>
<keyword id="KW-0460">Magnesium</keyword>
<keyword id="KW-0479">Metal-binding</keyword>
<keyword id="KW-0597">Phosphoprotein</keyword>
<gene>
    <name evidence="1" type="primary">glmM</name>
    <name type="ordered locus">BPUM_0164</name>
</gene>
<comment type="function">
    <text evidence="1">Catalyzes the conversion of glucosamine-6-phosphate to glucosamine-1-phosphate.</text>
</comment>
<comment type="catalytic activity">
    <reaction evidence="1">
        <text>alpha-D-glucosamine 1-phosphate = D-glucosamine 6-phosphate</text>
        <dbReference type="Rhea" id="RHEA:23424"/>
        <dbReference type="ChEBI" id="CHEBI:58516"/>
        <dbReference type="ChEBI" id="CHEBI:58725"/>
        <dbReference type="EC" id="5.4.2.10"/>
    </reaction>
</comment>
<comment type="cofactor">
    <cofactor evidence="1">
        <name>Mg(2+)</name>
        <dbReference type="ChEBI" id="CHEBI:18420"/>
    </cofactor>
    <text evidence="1">Binds 1 Mg(2+) ion per subunit.</text>
</comment>
<comment type="PTM">
    <text evidence="1">Activated by phosphorylation.</text>
</comment>
<comment type="similarity">
    <text evidence="1">Belongs to the phosphohexose mutase family.</text>
</comment>
<evidence type="ECO:0000255" key="1">
    <source>
        <dbReference type="HAMAP-Rule" id="MF_01554"/>
    </source>
</evidence>
<proteinExistence type="inferred from homology"/>
<reference key="1">
    <citation type="journal article" date="2007" name="PLoS ONE">
        <title>Paradoxical DNA repair and peroxide resistance gene conservation in Bacillus pumilus SAFR-032.</title>
        <authorList>
            <person name="Gioia J."/>
            <person name="Yerrapragada S."/>
            <person name="Qin X."/>
            <person name="Jiang H."/>
            <person name="Igboeli O.C."/>
            <person name="Muzny D."/>
            <person name="Dugan-Rocha S."/>
            <person name="Ding Y."/>
            <person name="Hawes A."/>
            <person name="Liu W."/>
            <person name="Perez L."/>
            <person name="Kovar C."/>
            <person name="Dinh H."/>
            <person name="Lee S."/>
            <person name="Nazareth L."/>
            <person name="Blyth P."/>
            <person name="Holder M."/>
            <person name="Buhay C."/>
            <person name="Tirumalai M.R."/>
            <person name="Liu Y."/>
            <person name="Dasgupta I."/>
            <person name="Bokhetache L."/>
            <person name="Fujita M."/>
            <person name="Karouia F."/>
            <person name="Eswara Moorthy P."/>
            <person name="Siefert J."/>
            <person name="Uzman A."/>
            <person name="Buzumbo P."/>
            <person name="Verma A."/>
            <person name="Zwiya H."/>
            <person name="McWilliams B.D."/>
            <person name="Olowu A."/>
            <person name="Clinkenbeard K.D."/>
            <person name="Newcombe D."/>
            <person name="Golebiewski L."/>
            <person name="Petrosino J.F."/>
            <person name="Nicholson W.L."/>
            <person name="Fox G.E."/>
            <person name="Venkateswaran K."/>
            <person name="Highlander S.K."/>
            <person name="Weinstock G.M."/>
        </authorList>
    </citation>
    <scope>NUCLEOTIDE SEQUENCE [LARGE SCALE GENOMIC DNA]</scope>
    <source>
        <strain>SAFR-032</strain>
    </source>
</reference>
<dbReference type="EC" id="5.4.2.10" evidence="1"/>
<dbReference type="EMBL" id="CP000813">
    <property type="protein sequence ID" value="ABV60863.1"/>
    <property type="molecule type" value="Genomic_DNA"/>
</dbReference>
<dbReference type="RefSeq" id="WP_012008743.1">
    <property type="nucleotide sequence ID" value="NZ_VEIS01000014.1"/>
</dbReference>
<dbReference type="SMR" id="A8F9E6"/>
<dbReference type="STRING" id="315750.BPUM_0164"/>
<dbReference type="GeneID" id="5619416"/>
<dbReference type="KEGG" id="bpu:BPUM_0164"/>
<dbReference type="eggNOG" id="COG1109">
    <property type="taxonomic scope" value="Bacteria"/>
</dbReference>
<dbReference type="HOGENOM" id="CLU_016950_7_0_9"/>
<dbReference type="OrthoDB" id="9806956at2"/>
<dbReference type="Proteomes" id="UP000001355">
    <property type="component" value="Chromosome"/>
</dbReference>
<dbReference type="GO" id="GO:0005829">
    <property type="term" value="C:cytosol"/>
    <property type="evidence" value="ECO:0007669"/>
    <property type="project" value="TreeGrafter"/>
</dbReference>
<dbReference type="GO" id="GO:0000287">
    <property type="term" value="F:magnesium ion binding"/>
    <property type="evidence" value="ECO:0007669"/>
    <property type="project" value="UniProtKB-UniRule"/>
</dbReference>
<dbReference type="GO" id="GO:0008966">
    <property type="term" value="F:phosphoglucosamine mutase activity"/>
    <property type="evidence" value="ECO:0007669"/>
    <property type="project" value="UniProtKB-UniRule"/>
</dbReference>
<dbReference type="GO" id="GO:0004615">
    <property type="term" value="F:phosphomannomutase activity"/>
    <property type="evidence" value="ECO:0007669"/>
    <property type="project" value="TreeGrafter"/>
</dbReference>
<dbReference type="GO" id="GO:0005975">
    <property type="term" value="P:carbohydrate metabolic process"/>
    <property type="evidence" value="ECO:0007669"/>
    <property type="project" value="InterPro"/>
</dbReference>
<dbReference type="GO" id="GO:0009252">
    <property type="term" value="P:peptidoglycan biosynthetic process"/>
    <property type="evidence" value="ECO:0007669"/>
    <property type="project" value="TreeGrafter"/>
</dbReference>
<dbReference type="GO" id="GO:0006048">
    <property type="term" value="P:UDP-N-acetylglucosamine biosynthetic process"/>
    <property type="evidence" value="ECO:0007669"/>
    <property type="project" value="TreeGrafter"/>
</dbReference>
<dbReference type="CDD" id="cd05802">
    <property type="entry name" value="GlmM"/>
    <property type="match status" value="1"/>
</dbReference>
<dbReference type="FunFam" id="3.30.310.50:FF:000001">
    <property type="entry name" value="Phosphoglucosamine mutase"/>
    <property type="match status" value="1"/>
</dbReference>
<dbReference type="FunFam" id="3.40.120.10:FF:000001">
    <property type="entry name" value="Phosphoglucosamine mutase"/>
    <property type="match status" value="1"/>
</dbReference>
<dbReference type="FunFam" id="3.40.120.10:FF:000002">
    <property type="entry name" value="Phosphoglucosamine mutase"/>
    <property type="match status" value="1"/>
</dbReference>
<dbReference type="Gene3D" id="3.40.120.10">
    <property type="entry name" value="Alpha-D-Glucose-1,6-Bisphosphate, subunit A, domain 3"/>
    <property type="match status" value="3"/>
</dbReference>
<dbReference type="Gene3D" id="3.30.310.50">
    <property type="entry name" value="Alpha-D-phosphohexomutase, C-terminal domain"/>
    <property type="match status" value="1"/>
</dbReference>
<dbReference type="HAMAP" id="MF_01554_B">
    <property type="entry name" value="GlmM_B"/>
    <property type="match status" value="1"/>
</dbReference>
<dbReference type="InterPro" id="IPR005844">
    <property type="entry name" value="A-D-PHexomutase_a/b/a-I"/>
</dbReference>
<dbReference type="InterPro" id="IPR016055">
    <property type="entry name" value="A-D-PHexomutase_a/b/a-I/II/III"/>
</dbReference>
<dbReference type="InterPro" id="IPR005845">
    <property type="entry name" value="A-D-PHexomutase_a/b/a-II"/>
</dbReference>
<dbReference type="InterPro" id="IPR005846">
    <property type="entry name" value="A-D-PHexomutase_a/b/a-III"/>
</dbReference>
<dbReference type="InterPro" id="IPR005843">
    <property type="entry name" value="A-D-PHexomutase_C"/>
</dbReference>
<dbReference type="InterPro" id="IPR036900">
    <property type="entry name" value="A-D-PHexomutase_C_sf"/>
</dbReference>
<dbReference type="InterPro" id="IPR016066">
    <property type="entry name" value="A-D-PHexomutase_CS"/>
</dbReference>
<dbReference type="InterPro" id="IPR005841">
    <property type="entry name" value="Alpha-D-phosphohexomutase_SF"/>
</dbReference>
<dbReference type="InterPro" id="IPR006352">
    <property type="entry name" value="GlmM_bact"/>
</dbReference>
<dbReference type="InterPro" id="IPR050060">
    <property type="entry name" value="Phosphoglucosamine_mutase"/>
</dbReference>
<dbReference type="NCBIfam" id="TIGR01455">
    <property type="entry name" value="glmM"/>
    <property type="match status" value="1"/>
</dbReference>
<dbReference type="NCBIfam" id="NF008139">
    <property type="entry name" value="PRK10887.1"/>
    <property type="match status" value="1"/>
</dbReference>
<dbReference type="PANTHER" id="PTHR42946:SF1">
    <property type="entry name" value="PHOSPHOGLUCOMUTASE (ALPHA-D-GLUCOSE-1,6-BISPHOSPHATE-DEPENDENT)"/>
    <property type="match status" value="1"/>
</dbReference>
<dbReference type="PANTHER" id="PTHR42946">
    <property type="entry name" value="PHOSPHOHEXOSE MUTASE"/>
    <property type="match status" value="1"/>
</dbReference>
<dbReference type="Pfam" id="PF02878">
    <property type="entry name" value="PGM_PMM_I"/>
    <property type="match status" value="1"/>
</dbReference>
<dbReference type="Pfam" id="PF02879">
    <property type="entry name" value="PGM_PMM_II"/>
    <property type="match status" value="1"/>
</dbReference>
<dbReference type="Pfam" id="PF02880">
    <property type="entry name" value="PGM_PMM_III"/>
    <property type="match status" value="1"/>
</dbReference>
<dbReference type="Pfam" id="PF00408">
    <property type="entry name" value="PGM_PMM_IV"/>
    <property type="match status" value="1"/>
</dbReference>
<dbReference type="PRINTS" id="PR00509">
    <property type="entry name" value="PGMPMM"/>
</dbReference>
<dbReference type="SUPFAM" id="SSF55957">
    <property type="entry name" value="Phosphoglucomutase, C-terminal domain"/>
    <property type="match status" value="1"/>
</dbReference>
<dbReference type="SUPFAM" id="SSF53738">
    <property type="entry name" value="Phosphoglucomutase, first 3 domains"/>
    <property type="match status" value="3"/>
</dbReference>
<dbReference type="PROSITE" id="PS00710">
    <property type="entry name" value="PGM_PMM"/>
    <property type="match status" value="1"/>
</dbReference>